<gene>
    <name type="primary">S2</name>
</gene>
<sequence length="235" mass="26767">MATVQKSQHSHFFLLVGCIVHLSNFCSTTTAQFDYFKLVLQWPNSYCSLKTTHCPRTRLPSQFTIHGLWPDNKSWPLSNCRDTSADVLKITDKGLIQDLAVHWPDLTRRQRKVPGQKFWVTQWKKHGACALPMYSFNDYFVKALELKKRNNVLDMLSRKSLTPGDQRVDVSDVNGAITKVTGGIAILKCPEGYLTEVIICFDPSGFPVIDCPGPFPCKDDPLEFQVLSRRKFQDL</sequence>
<protein>
    <recommendedName>
        <fullName>Ribonuclease S-2</fullName>
        <ecNumber evidence="7">4.6.1.19</ecNumber>
    </recommendedName>
    <alternativeName>
        <fullName>S2-RNase</fullName>
    </alternativeName>
    <alternativeName>
        <fullName>Stylar glycoprotein 2</fullName>
    </alternativeName>
</protein>
<dbReference type="EC" id="4.6.1.19" evidence="7"/>
<dbReference type="EMBL" id="X96465">
    <property type="protein sequence ID" value="CAA65319.1"/>
    <property type="molecule type" value="mRNA"/>
</dbReference>
<dbReference type="PIR" id="S71462">
    <property type="entry name" value="S71462"/>
</dbReference>
<dbReference type="SMR" id="Q38716"/>
<dbReference type="GlyCosmos" id="Q38716">
    <property type="glycosylation" value="1 site, No reported glycans"/>
</dbReference>
<dbReference type="GO" id="GO:0005576">
    <property type="term" value="C:extracellular region"/>
    <property type="evidence" value="ECO:0007669"/>
    <property type="project" value="UniProtKB-SubCell"/>
</dbReference>
<dbReference type="GO" id="GO:0033897">
    <property type="term" value="F:ribonuclease T2 activity"/>
    <property type="evidence" value="ECO:0007669"/>
    <property type="project" value="UniProtKB-EC"/>
</dbReference>
<dbReference type="GO" id="GO:0003723">
    <property type="term" value="F:RNA binding"/>
    <property type="evidence" value="ECO:0007669"/>
    <property type="project" value="InterPro"/>
</dbReference>
<dbReference type="GO" id="GO:0006401">
    <property type="term" value="P:RNA catabolic process"/>
    <property type="evidence" value="ECO:0007669"/>
    <property type="project" value="TreeGrafter"/>
</dbReference>
<dbReference type="CDD" id="cd01061">
    <property type="entry name" value="RNase_T2_euk"/>
    <property type="match status" value="1"/>
</dbReference>
<dbReference type="Gene3D" id="3.90.730.10">
    <property type="entry name" value="Ribonuclease T2-like"/>
    <property type="match status" value="1"/>
</dbReference>
<dbReference type="InterPro" id="IPR033697">
    <property type="entry name" value="Ribonuclease_T2_eukaryotic"/>
</dbReference>
<dbReference type="InterPro" id="IPR001568">
    <property type="entry name" value="RNase_T2-like"/>
</dbReference>
<dbReference type="InterPro" id="IPR036430">
    <property type="entry name" value="RNase_T2-like_sf"/>
</dbReference>
<dbReference type="InterPro" id="IPR018188">
    <property type="entry name" value="RNase_T2_His_AS_1"/>
</dbReference>
<dbReference type="InterPro" id="IPR033130">
    <property type="entry name" value="RNase_T2_His_AS_2"/>
</dbReference>
<dbReference type="PANTHER" id="PTHR11240:SF75">
    <property type="entry name" value="RIBONUCLEASE 3"/>
    <property type="match status" value="1"/>
</dbReference>
<dbReference type="PANTHER" id="PTHR11240">
    <property type="entry name" value="RIBONUCLEASE T2"/>
    <property type="match status" value="1"/>
</dbReference>
<dbReference type="Pfam" id="PF00445">
    <property type="entry name" value="Ribonuclease_T2"/>
    <property type="match status" value="1"/>
</dbReference>
<dbReference type="SUPFAM" id="SSF55895">
    <property type="entry name" value="Ribonuclease Rh-like"/>
    <property type="match status" value="1"/>
</dbReference>
<dbReference type="PROSITE" id="PS00530">
    <property type="entry name" value="RNASE_T2_1"/>
    <property type="match status" value="1"/>
</dbReference>
<dbReference type="PROSITE" id="PS00531">
    <property type="entry name" value="RNASE_T2_2"/>
    <property type="match status" value="1"/>
</dbReference>
<accession>Q38716</accession>
<evidence type="ECO:0000250" key="1">
    <source>
        <dbReference type="UniProtKB" id="P08056"/>
    </source>
</evidence>
<evidence type="ECO:0000250" key="2">
    <source>
        <dbReference type="UniProtKB" id="P23540"/>
    </source>
</evidence>
<evidence type="ECO:0000250" key="3">
    <source>
        <dbReference type="UniProtKB" id="Q7SID5"/>
    </source>
</evidence>
<evidence type="ECO:0000255" key="4"/>
<evidence type="ECO:0000255" key="5">
    <source>
        <dbReference type="PROSITE-ProRule" id="PRU00498"/>
    </source>
</evidence>
<evidence type="ECO:0000255" key="6">
    <source>
        <dbReference type="PROSITE-ProRule" id="PRU10045"/>
    </source>
</evidence>
<evidence type="ECO:0000255" key="7">
    <source>
        <dbReference type="PROSITE-ProRule" id="PRU10046"/>
    </source>
</evidence>
<evidence type="ECO:0000305" key="8"/>
<proteinExistence type="evidence at transcript level"/>
<comment type="function">
    <text>Self-incompatibility (SI) is the inherited ability of a flowering plant to prevent self-fertilization by discriminating between self and non-self pollen during pollination. In many species, self-incompatibility is controlled by the single, multiallelic locus S.</text>
</comment>
<comment type="catalytic activity">
    <reaction evidence="6 7">
        <text>a ribonucleotidyl-ribonucleotide-RNA + H2O = a 3'-end 3'-phospho-ribonucleotide-RNA + a 5'-end dephospho-ribonucleoside-RNA + H(+)</text>
        <dbReference type="Rhea" id="RHEA:68052"/>
        <dbReference type="Rhea" id="RHEA-COMP:10463"/>
        <dbReference type="Rhea" id="RHEA-COMP:13936"/>
        <dbReference type="Rhea" id="RHEA-COMP:17355"/>
        <dbReference type="ChEBI" id="CHEBI:15377"/>
        <dbReference type="ChEBI" id="CHEBI:15378"/>
        <dbReference type="ChEBI" id="CHEBI:83062"/>
        <dbReference type="ChEBI" id="CHEBI:138284"/>
        <dbReference type="ChEBI" id="CHEBI:173118"/>
        <dbReference type="EC" id="4.6.1.19"/>
    </reaction>
</comment>
<comment type="subcellular location">
    <subcellularLocation>
        <location>Secreted</location>
        <location>Extracellular space</location>
    </subcellularLocation>
</comment>
<comment type="similarity">
    <text evidence="8">Belongs to the RNase T2 family.</text>
</comment>
<comment type="caution">
    <text evidence="8">Gln-122 is present instead of the conserved Glu which is expected to act as an active site proton donor.</text>
</comment>
<feature type="signal peptide" evidence="4">
    <location>
        <begin position="1"/>
        <end position="31"/>
    </location>
</feature>
<feature type="chain" id="PRO_0000030984" description="Ribonuclease S-2">
    <location>
        <begin position="32"/>
        <end position="235"/>
    </location>
</feature>
<feature type="active site" description="Proton donor" evidence="3 6">
    <location>
        <position position="66"/>
    </location>
</feature>
<feature type="active site" evidence="1">
    <location>
        <position position="122"/>
    </location>
</feature>
<feature type="active site" description="Proton acceptor" evidence="3 6">
    <location>
        <position position="126"/>
    </location>
</feature>
<feature type="binding site" evidence="2">
    <location>
        <position position="41"/>
    </location>
    <ligand>
        <name>RNA</name>
        <dbReference type="ChEBI" id="CHEBI:33697"/>
    </ligand>
    <ligandPart>
        <name>a 3'-terminal ribonucleotide 3'-phosphate residue</name>
        <dbReference type="ChEBI" id="CHEBI:83062"/>
    </ligandPart>
</feature>
<feature type="binding site" evidence="2">
    <location>
        <position position="66"/>
    </location>
    <ligand>
        <name>RNA</name>
        <dbReference type="ChEBI" id="CHEBI:33697"/>
    </ligand>
    <ligandPart>
        <name>a 3'-terminal ribonucleotide 3'-phosphate residue</name>
        <dbReference type="ChEBI" id="CHEBI:83062"/>
    </ligandPart>
</feature>
<feature type="binding site" evidence="2">
    <location>
        <begin position="105"/>
        <end position="106"/>
    </location>
    <ligand>
        <name>RNA</name>
        <dbReference type="ChEBI" id="CHEBI:33697"/>
    </ligand>
    <ligandPart>
        <name>a 3'-terminal ribonucleotide 3'-phosphate residue</name>
        <dbReference type="ChEBI" id="CHEBI:83062"/>
    </ligandPart>
</feature>
<feature type="binding site" evidence="2">
    <location>
        <position position="108"/>
    </location>
    <ligand>
        <name>RNA</name>
        <dbReference type="ChEBI" id="CHEBI:33697"/>
    </ligand>
    <ligandPart>
        <name>a 3'-terminal ribonucleotide 3'-phosphate residue</name>
        <dbReference type="ChEBI" id="CHEBI:83062"/>
    </ligandPart>
</feature>
<feature type="binding site" evidence="2">
    <location>
        <position position="118"/>
    </location>
    <ligand>
        <name>RNA</name>
        <dbReference type="ChEBI" id="CHEBI:33697"/>
    </ligand>
    <ligandPart>
        <name>a 3'-terminal ribonucleotide 3'-phosphate residue</name>
        <dbReference type="ChEBI" id="CHEBI:83062"/>
    </ligandPart>
</feature>
<feature type="binding site" evidence="2">
    <location>
        <begin position="125"/>
        <end position="126"/>
    </location>
    <ligand>
        <name>RNA</name>
        <dbReference type="ChEBI" id="CHEBI:33697"/>
    </ligand>
    <ligandPart>
        <name>a 3'-terminal ribonucleotide 3'-phosphate residue</name>
        <dbReference type="ChEBI" id="CHEBI:83062"/>
    </ligandPart>
</feature>
<feature type="glycosylation site" description="N-linked (GlcNAc...) asparagine" evidence="5">
    <location>
        <position position="72"/>
    </location>
</feature>
<feature type="disulfide bond" evidence="3">
    <location>
        <begin position="47"/>
        <end position="54"/>
    </location>
</feature>
<feature type="disulfide bond" evidence="1">
    <location>
        <begin position="80"/>
        <end position="129"/>
    </location>
</feature>
<feature type="disulfide bond" evidence="1">
    <location>
        <begin position="189"/>
        <end position="217"/>
    </location>
</feature>
<feature type="disulfide bond" evidence="2">
    <location>
        <begin position="200"/>
        <end position="211"/>
    </location>
</feature>
<keyword id="KW-1015">Disulfide bond</keyword>
<keyword id="KW-0255">Endonuclease</keyword>
<keyword id="KW-0325">Glycoprotein</keyword>
<keyword id="KW-0378">Hydrolase</keyword>
<keyword id="KW-0456">Lyase</keyword>
<keyword id="KW-0540">Nuclease</keyword>
<keyword id="KW-0964">Secreted</keyword>
<keyword id="KW-0732">Signal</keyword>
<organism>
    <name type="scientific">Antirrhinum hispanicum</name>
    <name type="common">Snapdragon</name>
    <name type="synonym">Antirrhinum glutinosum</name>
    <dbReference type="NCBI Taxonomy" id="49039"/>
    <lineage>
        <taxon>Eukaryota</taxon>
        <taxon>Viridiplantae</taxon>
        <taxon>Streptophyta</taxon>
        <taxon>Embryophyta</taxon>
        <taxon>Tracheophyta</taxon>
        <taxon>Spermatophyta</taxon>
        <taxon>Magnoliopsida</taxon>
        <taxon>eudicotyledons</taxon>
        <taxon>Gunneridae</taxon>
        <taxon>Pentapetalae</taxon>
        <taxon>asterids</taxon>
        <taxon>lamiids</taxon>
        <taxon>Lamiales</taxon>
        <taxon>Plantaginaceae</taxon>
        <taxon>Antirrhineae</taxon>
        <taxon>Antirrhinum</taxon>
    </lineage>
</organism>
<name>RNS2_ANTHI</name>
<reference key="1">
    <citation type="journal article" date="1996" name="Plant Cell">
        <title>Origin of allelic diversity in antirrhinum S locus RNases.</title>
        <authorList>
            <person name="Xue Y."/>
            <person name="Carpenter R."/>
            <person name="Dickinson H.G."/>
            <person name="Coen E.S."/>
        </authorList>
    </citation>
    <scope>NUCLEOTIDE SEQUENCE [MRNA]</scope>
    <source>
        <tissue>Style</tissue>
    </source>
</reference>